<sequence>EKKDEYLSKSSASAAPVIDTLAHGYGKVLGKGRLPEVPVIVKARFVSKLAEEKSESLVVLSN</sequence>
<gene>
    <name type="primary">RPL28</name>
    <name type="synonym">RPL29</name>
</gene>
<protein>
    <recommendedName>
        <fullName evidence="1">Large ribosomal subunit protein uL15</fullName>
    </recommendedName>
    <alternativeName>
        <fullName>60S ribosomal protein L28</fullName>
    </alternativeName>
    <alternativeName>
        <fullName>L27A</fullName>
    </alternativeName>
    <alternativeName>
        <fullName>L29</fullName>
    </alternativeName>
</protein>
<accession>P47831</accession>
<organism>
    <name type="scientific">Candida albicans</name>
    <name type="common">Yeast</name>
    <dbReference type="NCBI Taxonomy" id="5476"/>
    <lineage>
        <taxon>Eukaryota</taxon>
        <taxon>Fungi</taxon>
        <taxon>Dikarya</taxon>
        <taxon>Ascomycota</taxon>
        <taxon>Saccharomycotina</taxon>
        <taxon>Pichiomycetes</taxon>
        <taxon>Debaryomycetaceae</taxon>
        <taxon>Candida/Lodderomyces clade</taxon>
        <taxon>Candida</taxon>
    </lineage>
</organism>
<proteinExistence type="evidence at transcript level"/>
<feature type="chain" id="PRO_0000104901" description="Large ribosomal subunit protein uL15">
    <location>
        <begin position="1" status="less than"/>
        <end position="62" status="greater than"/>
    </location>
</feature>
<feature type="non-terminal residue">
    <location>
        <position position="1"/>
    </location>
</feature>
<feature type="non-terminal residue">
    <location>
        <position position="62"/>
    </location>
</feature>
<keyword id="KW-0687">Ribonucleoprotein</keyword>
<keyword id="KW-0689">Ribosomal protein</keyword>
<dbReference type="EMBL" id="U37011">
    <property type="protein sequence ID" value="AAC49873.1"/>
    <property type="molecule type" value="mRNA"/>
</dbReference>
<dbReference type="SMR" id="P47831"/>
<dbReference type="EnsemblFungi" id="CR_03030C_A-T">
    <property type="protein sequence ID" value="CR_03030C_A-T-p1"/>
    <property type="gene ID" value="CR_03030C_A"/>
</dbReference>
<dbReference type="VEuPathDB" id="FungiDB:CAWG_01639"/>
<dbReference type="VEuPathDB" id="FungiDB:CR_03030C_A"/>
<dbReference type="GO" id="GO:0022625">
    <property type="term" value="C:cytosolic large ribosomal subunit"/>
    <property type="evidence" value="ECO:0007669"/>
    <property type="project" value="EnsemblFungi"/>
</dbReference>
<dbReference type="GO" id="GO:0005634">
    <property type="term" value="C:nucleus"/>
    <property type="evidence" value="ECO:0007669"/>
    <property type="project" value="EnsemblFungi"/>
</dbReference>
<dbReference type="GO" id="GO:0003723">
    <property type="term" value="F:RNA binding"/>
    <property type="evidence" value="ECO:0007669"/>
    <property type="project" value="EnsemblFungi"/>
</dbReference>
<dbReference type="GO" id="GO:0003735">
    <property type="term" value="F:structural constituent of ribosome"/>
    <property type="evidence" value="ECO:0007669"/>
    <property type="project" value="TreeGrafter"/>
</dbReference>
<dbReference type="Gene3D" id="3.100.10.10">
    <property type="match status" value="1"/>
</dbReference>
<dbReference type="InterPro" id="IPR021131">
    <property type="entry name" value="Ribosomal_uL15/eL18"/>
</dbReference>
<dbReference type="InterPro" id="IPR036227">
    <property type="entry name" value="Ribosomal_uL15/eL18_sf"/>
</dbReference>
<dbReference type="PANTHER" id="PTHR11721">
    <property type="entry name" value="60S RIBOSOMAL PROTEIN L27A"/>
    <property type="match status" value="1"/>
</dbReference>
<dbReference type="PANTHER" id="PTHR11721:SF3">
    <property type="entry name" value="LARGE RIBOSOMAL SUBUNIT PROTEIN UL15"/>
    <property type="match status" value="1"/>
</dbReference>
<dbReference type="Pfam" id="PF00828">
    <property type="entry name" value="Ribosomal_L27A"/>
    <property type="match status" value="1"/>
</dbReference>
<dbReference type="SUPFAM" id="SSF52080">
    <property type="entry name" value="Ribosomal proteins L15p and L18e"/>
    <property type="match status" value="1"/>
</dbReference>
<name>RL28_CANAX</name>
<evidence type="ECO:0000305" key="1"/>
<comment type="similarity">
    <text evidence="1">Belongs to the universal ribosomal protein uL15 family.</text>
</comment>
<reference key="1">
    <citation type="journal article" date="1997" name="Yeast">
        <title>Characterization and regulation of the genes encoding ribosomal proteins L39 and S7 of the human pathogen Candida albicans.</title>
        <authorList>
            <person name="Delbrueck S."/>
            <person name="Sonneborn A."/>
            <person name="Gerads M."/>
            <person name="Grablowitz A.H."/>
            <person name="Ernst J.F."/>
        </authorList>
    </citation>
    <scope>NUCLEOTIDE SEQUENCE [MRNA]</scope>
    <source>
        <strain>HOG301</strain>
    </source>
</reference>